<sequence>MAAQASEDLKKLDLNGQAGDSKAAAATAGQAEAGEAEDDSDDDEVDGNAAPEGAASGAAKKKKKRKPKKKKKGGAKVQSSPPRVPISQLFPNNQYPEGEIVEYKNENSYRTTNEEKRYLDRMNNDFLQEYRQGAEVHRQVRQYAQKNIKPGQTLTEIAEGIEDAVRALTGHQGLEEGDNLKGGMGFPCGLSINHCAAHYTPNAGNKMVLQQGDVMKVDFGAHLNGRIVDSAFTMAFDPVYDPLLEAVKDATNTGIREAGIDVRMSDIGAAIQETMESYEVEINGQMHPVKCIRNLNGHNIDQHVIHGGKSVPIVKGGDQTKMEEGEVFAIETFGSTGKGYVREDMETSHYALVPNATPVPLRLSSAKNLLNVINKNFGTLPFCRRYLDRLGQDKYLLGLNNLVSSGIVQDYPPLCDIKGSYTAQFEHTIVLRPTVKEVISRGDDY</sequence>
<organism>
    <name type="scientific">Aspergillus terreus (strain NIH 2624 / FGSC A1156)</name>
    <dbReference type="NCBI Taxonomy" id="341663"/>
    <lineage>
        <taxon>Eukaryota</taxon>
        <taxon>Fungi</taxon>
        <taxon>Dikarya</taxon>
        <taxon>Ascomycota</taxon>
        <taxon>Pezizomycotina</taxon>
        <taxon>Eurotiomycetes</taxon>
        <taxon>Eurotiomycetidae</taxon>
        <taxon>Eurotiales</taxon>
        <taxon>Aspergillaceae</taxon>
        <taxon>Aspergillus</taxon>
        <taxon>Aspergillus subgen. Circumdati</taxon>
    </lineage>
</organism>
<dbReference type="EC" id="3.4.11.18" evidence="1"/>
<dbReference type="EMBL" id="CH476600">
    <property type="protein sequence ID" value="EAU34609.1"/>
    <property type="molecule type" value="Genomic_DNA"/>
</dbReference>
<dbReference type="RefSeq" id="XP_001214718.1">
    <property type="nucleotide sequence ID" value="XM_001214718.1"/>
</dbReference>
<dbReference type="SMR" id="Q0CL94"/>
<dbReference type="STRING" id="341663.Q0CL94"/>
<dbReference type="MEROPS" id="M24.002"/>
<dbReference type="EnsemblFungi" id="EAU34609">
    <property type="protein sequence ID" value="EAU34609"/>
    <property type="gene ID" value="ATEG_05540"/>
</dbReference>
<dbReference type="GeneID" id="4320577"/>
<dbReference type="VEuPathDB" id="FungiDB:ATEG_05540"/>
<dbReference type="eggNOG" id="KOG2775">
    <property type="taxonomic scope" value="Eukaryota"/>
</dbReference>
<dbReference type="HOGENOM" id="CLU_015857_7_1_1"/>
<dbReference type="OMA" id="PFAKRWL"/>
<dbReference type="OrthoDB" id="7848262at2759"/>
<dbReference type="Proteomes" id="UP000007963">
    <property type="component" value="Unassembled WGS sequence"/>
</dbReference>
<dbReference type="GO" id="GO:0005737">
    <property type="term" value="C:cytoplasm"/>
    <property type="evidence" value="ECO:0007669"/>
    <property type="project" value="UniProtKB-SubCell"/>
</dbReference>
<dbReference type="GO" id="GO:0004239">
    <property type="term" value="F:initiator methionyl aminopeptidase activity"/>
    <property type="evidence" value="ECO:0007669"/>
    <property type="project" value="UniProtKB-UniRule"/>
</dbReference>
<dbReference type="GO" id="GO:0046872">
    <property type="term" value="F:metal ion binding"/>
    <property type="evidence" value="ECO:0007669"/>
    <property type="project" value="UniProtKB-UniRule"/>
</dbReference>
<dbReference type="GO" id="GO:0070006">
    <property type="term" value="F:metalloaminopeptidase activity"/>
    <property type="evidence" value="ECO:0007669"/>
    <property type="project" value="UniProtKB-UniRule"/>
</dbReference>
<dbReference type="GO" id="GO:0006508">
    <property type="term" value="P:proteolysis"/>
    <property type="evidence" value="ECO:0007669"/>
    <property type="project" value="UniProtKB-KW"/>
</dbReference>
<dbReference type="CDD" id="cd01088">
    <property type="entry name" value="MetAP2"/>
    <property type="match status" value="1"/>
</dbReference>
<dbReference type="FunFam" id="1.10.10.10:FF:000370">
    <property type="entry name" value="Methionine aminopeptidase 2"/>
    <property type="match status" value="1"/>
</dbReference>
<dbReference type="Gene3D" id="3.90.230.10">
    <property type="entry name" value="Creatinase/methionine aminopeptidase superfamily"/>
    <property type="match status" value="1"/>
</dbReference>
<dbReference type="Gene3D" id="1.10.10.10">
    <property type="entry name" value="Winged helix-like DNA-binding domain superfamily/Winged helix DNA-binding domain"/>
    <property type="match status" value="1"/>
</dbReference>
<dbReference type="HAMAP" id="MF_03175">
    <property type="entry name" value="MetAP_2_euk"/>
    <property type="match status" value="1"/>
</dbReference>
<dbReference type="InterPro" id="IPR036005">
    <property type="entry name" value="Creatinase/aminopeptidase-like"/>
</dbReference>
<dbReference type="InterPro" id="IPR050247">
    <property type="entry name" value="Met_Aminopeptidase_Type2"/>
</dbReference>
<dbReference type="InterPro" id="IPR000994">
    <property type="entry name" value="Pept_M24"/>
</dbReference>
<dbReference type="InterPro" id="IPR001714">
    <property type="entry name" value="Pept_M24_MAP"/>
</dbReference>
<dbReference type="InterPro" id="IPR002468">
    <property type="entry name" value="Pept_M24A_MAP2"/>
</dbReference>
<dbReference type="InterPro" id="IPR018349">
    <property type="entry name" value="Pept_M24A_MAP2_BS"/>
</dbReference>
<dbReference type="InterPro" id="IPR036388">
    <property type="entry name" value="WH-like_DNA-bd_sf"/>
</dbReference>
<dbReference type="InterPro" id="IPR036390">
    <property type="entry name" value="WH_DNA-bd_sf"/>
</dbReference>
<dbReference type="NCBIfam" id="TIGR00501">
    <property type="entry name" value="met_pdase_II"/>
    <property type="match status" value="1"/>
</dbReference>
<dbReference type="PANTHER" id="PTHR45777">
    <property type="entry name" value="METHIONINE AMINOPEPTIDASE 2"/>
    <property type="match status" value="1"/>
</dbReference>
<dbReference type="PANTHER" id="PTHR45777:SF2">
    <property type="entry name" value="METHIONINE AMINOPEPTIDASE 2"/>
    <property type="match status" value="1"/>
</dbReference>
<dbReference type="Pfam" id="PF00557">
    <property type="entry name" value="Peptidase_M24"/>
    <property type="match status" value="1"/>
</dbReference>
<dbReference type="PRINTS" id="PR00599">
    <property type="entry name" value="MAPEPTIDASE"/>
</dbReference>
<dbReference type="SUPFAM" id="SSF55920">
    <property type="entry name" value="Creatinase/aminopeptidase"/>
    <property type="match status" value="1"/>
</dbReference>
<dbReference type="SUPFAM" id="SSF46785">
    <property type="entry name" value="Winged helix' DNA-binding domain"/>
    <property type="match status" value="1"/>
</dbReference>
<dbReference type="PROSITE" id="PS01202">
    <property type="entry name" value="MAP_2"/>
    <property type="match status" value="1"/>
</dbReference>
<proteinExistence type="inferred from homology"/>
<protein>
    <recommendedName>
        <fullName evidence="1">Methionine aminopeptidase 2-2</fullName>
        <shortName evidence="1">MAP 2-2</shortName>
        <shortName evidence="1">MetAP 2-2</shortName>
        <ecNumber evidence="1">3.4.11.18</ecNumber>
    </recommendedName>
    <alternativeName>
        <fullName evidence="1">Peptidase M</fullName>
    </alternativeName>
</protein>
<comment type="function">
    <text evidence="1">Cotranslationally removes the N-terminal methionine from nascent proteins. The N-terminal methionine is often cleaved when the second residue in the primary sequence is small and uncharged (Met-Ala-, Cys, Gly, Pro, Ser, Thr, or Val).</text>
</comment>
<comment type="catalytic activity">
    <reaction evidence="1">
        <text>Release of N-terminal amino acids, preferentially methionine, from peptides and arylamides.</text>
        <dbReference type="EC" id="3.4.11.18"/>
    </reaction>
</comment>
<comment type="cofactor">
    <cofactor evidence="1">
        <name>Co(2+)</name>
        <dbReference type="ChEBI" id="CHEBI:48828"/>
    </cofactor>
    <cofactor evidence="1">
        <name>Zn(2+)</name>
        <dbReference type="ChEBI" id="CHEBI:29105"/>
    </cofactor>
    <cofactor evidence="1">
        <name>Mn(2+)</name>
        <dbReference type="ChEBI" id="CHEBI:29035"/>
    </cofactor>
    <cofactor evidence="1">
        <name>Fe(2+)</name>
        <dbReference type="ChEBI" id="CHEBI:29033"/>
    </cofactor>
    <text evidence="1">Binds 2 divalent metal cations per subunit. Has a high-affinity and a low affinity metal-binding site. The true nature of the physiological cofactor is under debate. The enzyme is active with cobalt, zinc, manganese or divalent iron ions. Most likely, methionine aminopeptidases function as mononuclear Fe(2+)-metalloproteases under physiological conditions, and the catalytically relevant metal-binding site has been assigned to the histidine-containing high-affinity site.</text>
</comment>
<comment type="subcellular location">
    <subcellularLocation>
        <location evidence="1">Cytoplasm</location>
    </subcellularLocation>
</comment>
<comment type="similarity">
    <text evidence="1">Belongs to the peptidase M24A family. Methionine aminopeptidase eukaryotic type 2 subfamily.</text>
</comment>
<evidence type="ECO:0000255" key="1">
    <source>
        <dbReference type="HAMAP-Rule" id="MF_03175"/>
    </source>
</evidence>
<evidence type="ECO:0000256" key="2">
    <source>
        <dbReference type="SAM" id="MobiDB-lite"/>
    </source>
</evidence>
<feature type="chain" id="PRO_0000407603" description="Methionine aminopeptidase 2-2">
    <location>
        <begin position="1"/>
        <end position="445"/>
    </location>
</feature>
<feature type="region of interest" description="Disordered" evidence="2">
    <location>
        <begin position="1"/>
        <end position="92"/>
    </location>
</feature>
<feature type="compositionally biased region" description="Low complexity" evidence="2">
    <location>
        <begin position="18"/>
        <end position="33"/>
    </location>
</feature>
<feature type="compositionally biased region" description="Acidic residues" evidence="2">
    <location>
        <begin position="34"/>
        <end position="46"/>
    </location>
</feature>
<feature type="compositionally biased region" description="Low complexity" evidence="2">
    <location>
        <begin position="47"/>
        <end position="58"/>
    </location>
</feature>
<feature type="compositionally biased region" description="Basic residues" evidence="2">
    <location>
        <begin position="59"/>
        <end position="74"/>
    </location>
</feature>
<feature type="binding site" evidence="1">
    <location>
        <position position="198"/>
    </location>
    <ligand>
        <name>substrate</name>
    </ligand>
</feature>
<feature type="binding site" evidence="1">
    <location>
        <position position="218"/>
    </location>
    <ligand>
        <name>a divalent metal cation</name>
        <dbReference type="ChEBI" id="CHEBI:60240"/>
        <label>1</label>
    </ligand>
</feature>
<feature type="binding site" evidence="1">
    <location>
        <position position="229"/>
    </location>
    <ligand>
        <name>a divalent metal cation</name>
        <dbReference type="ChEBI" id="CHEBI:60240"/>
        <label>1</label>
    </ligand>
</feature>
<feature type="binding site" evidence="1">
    <location>
        <position position="229"/>
    </location>
    <ligand>
        <name>a divalent metal cation</name>
        <dbReference type="ChEBI" id="CHEBI:60240"/>
        <label>2</label>
        <note>catalytic</note>
    </ligand>
</feature>
<feature type="binding site" evidence="1">
    <location>
        <position position="298"/>
    </location>
    <ligand>
        <name>a divalent metal cation</name>
        <dbReference type="ChEBI" id="CHEBI:60240"/>
        <label>2</label>
        <note>catalytic</note>
    </ligand>
</feature>
<feature type="binding site" evidence="1">
    <location>
        <position position="306"/>
    </location>
    <ligand>
        <name>substrate</name>
    </ligand>
</feature>
<feature type="binding site" evidence="1">
    <location>
        <position position="331"/>
    </location>
    <ligand>
        <name>a divalent metal cation</name>
        <dbReference type="ChEBI" id="CHEBI:60240"/>
        <label>2</label>
        <note>catalytic</note>
    </ligand>
</feature>
<feature type="binding site" evidence="1">
    <location>
        <position position="426"/>
    </location>
    <ligand>
        <name>a divalent metal cation</name>
        <dbReference type="ChEBI" id="CHEBI:60240"/>
        <label>1</label>
    </ligand>
</feature>
<feature type="binding site" evidence="1">
    <location>
        <position position="426"/>
    </location>
    <ligand>
        <name>a divalent metal cation</name>
        <dbReference type="ChEBI" id="CHEBI:60240"/>
        <label>2</label>
        <note>catalytic</note>
    </ligand>
</feature>
<accession>Q0CL94</accession>
<gene>
    <name type="ORF">ATEG_05540</name>
</gene>
<keyword id="KW-0031">Aminopeptidase</keyword>
<keyword id="KW-0963">Cytoplasm</keyword>
<keyword id="KW-0378">Hydrolase</keyword>
<keyword id="KW-0479">Metal-binding</keyword>
<keyword id="KW-0645">Protease</keyword>
<keyword id="KW-1185">Reference proteome</keyword>
<reference key="1">
    <citation type="submission" date="2005-09" db="EMBL/GenBank/DDBJ databases">
        <title>Annotation of the Aspergillus terreus NIH2624 genome.</title>
        <authorList>
            <person name="Birren B.W."/>
            <person name="Lander E.S."/>
            <person name="Galagan J.E."/>
            <person name="Nusbaum C."/>
            <person name="Devon K."/>
            <person name="Henn M."/>
            <person name="Ma L.-J."/>
            <person name="Jaffe D.B."/>
            <person name="Butler J."/>
            <person name="Alvarez P."/>
            <person name="Gnerre S."/>
            <person name="Grabherr M."/>
            <person name="Kleber M."/>
            <person name="Mauceli E.W."/>
            <person name="Brockman W."/>
            <person name="Rounsley S."/>
            <person name="Young S.K."/>
            <person name="LaButti K."/>
            <person name="Pushparaj V."/>
            <person name="DeCaprio D."/>
            <person name="Crawford M."/>
            <person name="Koehrsen M."/>
            <person name="Engels R."/>
            <person name="Montgomery P."/>
            <person name="Pearson M."/>
            <person name="Howarth C."/>
            <person name="Larson L."/>
            <person name="Luoma S."/>
            <person name="White J."/>
            <person name="Alvarado L."/>
            <person name="Kodira C.D."/>
            <person name="Zeng Q."/>
            <person name="Oleary S."/>
            <person name="Yandava C."/>
            <person name="Denning D.W."/>
            <person name="Nierman W.C."/>
            <person name="Milne T."/>
            <person name="Madden K."/>
        </authorList>
    </citation>
    <scope>NUCLEOTIDE SEQUENCE [LARGE SCALE GENOMIC DNA]</scope>
    <source>
        <strain>NIH 2624 / FGSC A1156</strain>
    </source>
</reference>
<name>MAP22_ASPTN</name>